<reference key="1">
    <citation type="journal article" date="2006" name="Lancet">
        <title>Complete genome sequence of USA300, an epidemic clone of community-acquired meticillin-resistant Staphylococcus aureus.</title>
        <authorList>
            <person name="Diep B.A."/>
            <person name="Gill S.R."/>
            <person name="Chang R.F."/>
            <person name="Phan T.H."/>
            <person name="Chen J.H."/>
            <person name="Davidson M.G."/>
            <person name="Lin F."/>
            <person name="Lin J."/>
            <person name="Carleton H.A."/>
            <person name="Mongodin E.F."/>
            <person name="Sensabaugh G.F."/>
            <person name="Perdreau-Remington F."/>
        </authorList>
    </citation>
    <scope>NUCLEOTIDE SEQUENCE [LARGE SCALE GENOMIC DNA]</scope>
    <source>
        <strain>USA300</strain>
    </source>
</reference>
<evidence type="ECO:0000255" key="1">
    <source>
        <dbReference type="HAMAP-Rule" id="MF_00451"/>
    </source>
</evidence>
<evidence type="ECO:0000305" key="2"/>
<organism>
    <name type="scientific">Staphylococcus aureus (strain USA300)</name>
    <dbReference type="NCBI Taxonomy" id="367830"/>
    <lineage>
        <taxon>Bacteria</taxon>
        <taxon>Bacillati</taxon>
        <taxon>Bacillota</taxon>
        <taxon>Bacilli</taxon>
        <taxon>Bacillales</taxon>
        <taxon>Staphylococcaceae</taxon>
        <taxon>Staphylococcus</taxon>
    </lineage>
</organism>
<feature type="chain" id="PRO_0000242518" description="Nucleoside diphosphate kinase">
    <location>
        <begin position="1"/>
        <end position="149"/>
    </location>
</feature>
<feature type="active site" description="Pros-phosphohistidine intermediate" evidence="1">
    <location>
        <position position="115"/>
    </location>
</feature>
<feature type="binding site" evidence="1">
    <location>
        <position position="9"/>
    </location>
    <ligand>
        <name>ATP</name>
        <dbReference type="ChEBI" id="CHEBI:30616"/>
    </ligand>
</feature>
<feature type="binding site" evidence="1">
    <location>
        <position position="57"/>
    </location>
    <ligand>
        <name>ATP</name>
        <dbReference type="ChEBI" id="CHEBI:30616"/>
    </ligand>
</feature>
<feature type="binding site" evidence="1">
    <location>
        <position position="85"/>
    </location>
    <ligand>
        <name>ATP</name>
        <dbReference type="ChEBI" id="CHEBI:30616"/>
    </ligand>
</feature>
<feature type="binding site" evidence="1">
    <location>
        <position position="91"/>
    </location>
    <ligand>
        <name>ATP</name>
        <dbReference type="ChEBI" id="CHEBI:30616"/>
    </ligand>
</feature>
<feature type="binding site" evidence="1">
    <location>
        <position position="102"/>
    </location>
    <ligand>
        <name>ATP</name>
        <dbReference type="ChEBI" id="CHEBI:30616"/>
    </ligand>
</feature>
<feature type="binding site" evidence="1">
    <location>
        <position position="112"/>
    </location>
    <ligand>
        <name>ATP</name>
        <dbReference type="ChEBI" id="CHEBI:30616"/>
    </ligand>
</feature>
<accession>Q2FGX3</accession>
<dbReference type="EC" id="2.7.4.6" evidence="1"/>
<dbReference type="EMBL" id="CP000255">
    <property type="protein sequence ID" value="ABD21429.1"/>
    <property type="status" value="ALT_INIT"/>
    <property type="molecule type" value="Genomic_DNA"/>
</dbReference>
<dbReference type="RefSeq" id="WP_000442480.1">
    <property type="nucleotide sequence ID" value="NZ_CP027476.1"/>
</dbReference>
<dbReference type="SMR" id="Q2FGX3"/>
<dbReference type="GeneID" id="66839658"/>
<dbReference type="KEGG" id="saa:SAUSA300_1358"/>
<dbReference type="HOGENOM" id="CLU_060216_6_3_9"/>
<dbReference type="OMA" id="QHYGEHK"/>
<dbReference type="Proteomes" id="UP000001939">
    <property type="component" value="Chromosome"/>
</dbReference>
<dbReference type="GO" id="GO:0005737">
    <property type="term" value="C:cytoplasm"/>
    <property type="evidence" value="ECO:0007669"/>
    <property type="project" value="UniProtKB-SubCell"/>
</dbReference>
<dbReference type="GO" id="GO:0005524">
    <property type="term" value="F:ATP binding"/>
    <property type="evidence" value="ECO:0007669"/>
    <property type="project" value="UniProtKB-UniRule"/>
</dbReference>
<dbReference type="GO" id="GO:0046872">
    <property type="term" value="F:metal ion binding"/>
    <property type="evidence" value="ECO:0007669"/>
    <property type="project" value="UniProtKB-KW"/>
</dbReference>
<dbReference type="GO" id="GO:0004550">
    <property type="term" value="F:nucleoside diphosphate kinase activity"/>
    <property type="evidence" value="ECO:0007669"/>
    <property type="project" value="UniProtKB-UniRule"/>
</dbReference>
<dbReference type="GO" id="GO:0006241">
    <property type="term" value="P:CTP biosynthetic process"/>
    <property type="evidence" value="ECO:0007669"/>
    <property type="project" value="UniProtKB-UniRule"/>
</dbReference>
<dbReference type="GO" id="GO:0006183">
    <property type="term" value="P:GTP biosynthetic process"/>
    <property type="evidence" value="ECO:0007669"/>
    <property type="project" value="UniProtKB-UniRule"/>
</dbReference>
<dbReference type="GO" id="GO:0006228">
    <property type="term" value="P:UTP biosynthetic process"/>
    <property type="evidence" value="ECO:0007669"/>
    <property type="project" value="UniProtKB-UniRule"/>
</dbReference>
<dbReference type="CDD" id="cd04413">
    <property type="entry name" value="NDPk_I"/>
    <property type="match status" value="1"/>
</dbReference>
<dbReference type="FunFam" id="3.30.70.141:FF:000002">
    <property type="entry name" value="Nucleoside diphosphate kinase"/>
    <property type="match status" value="1"/>
</dbReference>
<dbReference type="Gene3D" id="3.30.70.141">
    <property type="entry name" value="Nucleoside diphosphate kinase-like domain"/>
    <property type="match status" value="1"/>
</dbReference>
<dbReference type="HAMAP" id="MF_00451">
    <property type="entry name" value="NDP_kinase"/>
    <property type="match status" value="1"/>
</dbReference>
<dbReference type="InterPro" id="IPR034907">
    <property type="entry name" value="NDK-like_dom"/>
</dbReference>
<dbReference type="InterPro" id="IPR036850">
    <property type="entry name" value="NDK-like_dom_sf"/>
</dbReference>
<dbReference type="InterPro" id="IPR001564">
    <property type="entry name" value="Nucleoside_diP_kinase"/>
</dbReference>
<dbReference type="InterPro" id="IPR023005">
    <property type="entry name" value="Nucleoside_diP_kinase_AS"/>
</dbReference>
<dbReference type="NCBIfam" id="NF001908">
    <property type="entry name" value="PRK00668.1"/>
    <property type="match status" value="1"/>
</dbReference>
<dbReference type="PANTHER" id="PTHR11349">
    <property type="entry name" value="NUCLEOSIDE DIPHOSPHATE KINASE"/>
    <property type="match status" value="1"/>
</dbReference>
<dbReference type="Pfam" id="PF00334">
    <property type="entry name" value="NDK"/>
    <property type="match status" value="1"/>
</dbReference>
<dbReference type="PRINTS" id="PR01243">
    <property type="entry name" value="NUCDPKINASE"/>
</dbReference>
<dbReference type="SMART" id="SM00562">
    <property type="entry name" value="NDK"/>
    <property type="match status" value="1"/>
</dbReference>
<dbReference type="SUPFAM" id="SSF54919">
    <property type="entry name" value="Nucleoside diphosphate kinase, NDK"/>
    <property type="match status" value="1"/>
</dbReference>
<dbReference type="PROSITE" id="PS00469">
    <property type="entry name" value="NDPK"/>
    <property type="match status" value="1"/>
</dbReference>
<dbReference type="PROSITE" id="PS51374">
    <property type="entry name" value="NDPK_LIKE"/>
    <property type="match status" value="1"/>
</dbReference>
<sequence length="149" mass="16575">MERTFLMIKPDAVQRNLIGEVISRIERKGLKLVGGKLMQVPMELAETHYGEHQGKPFYNDLISFITSAPVFAMVVEGEDAVNVSRHIIGSTNPSEASPGSIRGDLGLTVGRNIIHGSDSLESAEREINLWFNENEITSYASPRDAWLYE</sequence>
<comment type="function">
    <text evidence="1">Major role in the synthesis of nucleoside triphosphates other than ATP. The ATP gamma phosphate is transferred to the NDP beta phosphate via a ping-pong mechanism, using a phosphorylated active-site intermediate.</text>
</comment>
<comment type="catalytic activity">
    <reaction evidence="1">
        <text>a 2'-deoxyribonucleoside 5'-diphosphate + ATP = a 2'-deoxyribonucleoside 5'-triphosphate + ADP</text>
        <dbReference type="Rhea" id="RHEA:44640"/>
        <dbReference type="ChEBI" id="CHEBI:30616"/>
        <dbReference type="ChEBI" id="CHEBI:61560"/>
        <dbReference type="ChEBI" id="CHEBI:73316"/>
        <dbReference type="ChEBI" id="CHEBI:456216"/>
        <dbReference type="EC" id="2.7.4.6"/>
    </reaction>
</comment>
<comment type="catalytic activity">
    <reaction evidence="1">
        <text>a ribonucleoside 5'-diphosphate + ATP = a ribonucleoside 5'-triphosphate + ADP</text>
        <dbReference type="Rhea" id="RHEA:18113"/>
        <dbReference type="ChEBI" id="CHEBI:30616"/>
        <dbReference type="ChEBI" id="CHEBI:57930"/>
        <dbReference type="ChEBI" id="CHEBI:61557"/>
        <dbReference type="ChEBI" id="CHEBI:456216"/>
        <dbReference type="EC" id="2.7.4.6"/>
    </reaction>
</comment>
<comment type="cofactor">
    <cofactor evidence="1">
        <name>Mg(2+)</name>
        <dbReference type="ChEBI" id="CHEBI:18420"/>
    </cofactor>
</comment>
<comment type="subunit">
    <text evidence="1">Homotetramer.</text>
</comment>
<comment type="subcellular location">
    <subcellularLocation>
        <location evidence="1">Cytoplasm</location>
    </subcellularLocation>
</comment>
<comment type="similarity">
    <text evidence="1">Belongs to the NDK family.</text>
</comment>
<comment type="sequence caution" evidence="2">
    <conflict type="erroneous initiation">
        <sequence resource="EMBL-CDS" id="ABD21429"/>
    </conflict>
</comment>
<gene>
    <name evidence="1" type="primary">ndk</name>
    <name type="ordered locus">SAUSA300_1358</name>
</gene>
<proteinExistence type="inferred from homology"/>
<protein>
    <recommendedName>
        <fullName evidence="1">Nucleoside diphosphate kinase</fullName>
        <shortName evidence="1">NDK</shortName>
        <shortName evidence="1">NDP kinase</shortName>
        <ecNumber evidence="1">2.7.4.6</ecNumber>
    </recommendedName>
    <alternativeName>
        <fullName evidence="1">Nucleoside-2-P kinase</fullName>
    </alternativeName>
</protein>
<name>NDK_STAA3</name>
<keyword id="KW-0067">ATP-binding</keyword>
<keyword id="KW-0963">Cytoplasm</keyword>
<keyword id="KW-0418">Kinase</keyword>
<keyword id="KW-0460">Magnesium</keyword>
<keyword id="KW-0479">Metal-binding</keyword>
<keyword id="KW-0546">Nucleotide metabolism</keyword>
<keyword id="KW-0547">Nucleotide-binding</keyword>
<keyword id="KW-0597">Phosphoprotein</keyword>
<keyword id="KW-0808">Transferase</keyword>